<protein>
    <recommendedName>
        <fullName evidence="1">Large ribosomal subunit protein bL9</fullName>
    </recommendedName>
    <alternativeName>
        <fullName evidence="2">50S ribosomal protein L9</fullName>
    </alternativeName>
</protein>
<keyword id="KW-1185">Reference proteome</keyword>
<keyword id="KW-0687">Ribonucleoprotein</keyword>
<keyword id="KW-0689">Ribosomal protein</keyword>
<keyword id="KW-0694">RNA-binding</keyword>
<keyword id="KW-0699">rRNA-binding</keyword>
<accession>B2VCV8</accession>
<sequence length="150" mass="15839">MQVILLDKVANLGSLGDQVNVKAGYARNFLVPQGKAVPATKKNVEFFETRRAELEAKVADVLAAAHARAEKINALGTVTLASKSGDEGKLFGSIGTRDIADAVTAAGVEVAKSEVRLPNGVLRTTGEHEVDFQVHSEVFAKLTVNIVAEA</sequence>
<reference key="1">
    <citation type="journal article" date="2008" name="Environ. Microbiol.">
        <title>The genome of Erwinia tasmaniensis strain Et1/99, a non-pathogenic bacterium in the genus Erwinia.</title>
        <authorList>
            <person name="Kube M."/>
            <person name="Migdoll A.M."/>
            <person name="Mueller I."/>
            <person name="Kuhl H."/>
            <person name="Beck A."/>
            <person name="Reinhardt R."/>
            <person name="Geider K."/>
        </authorList>
    </citation>
    <scope>NUCLEOTIDE SEQUENCE [LARGE SCALE GENOMIC DNA]</scope>
    <source>
        <strain>DSM 17950 / CFBP 7177 / CIP 109463 / NCPPB 4357 / Et1/99</strain>
    </source>
</reference>
<organism>
    <name type="scientific">Erwinia tasmaniensis (strain DSM 17950 / CFBP 7177 / CIP 109463 / NCPPB 4357 / Et1/99)</name>
    <dbReference type="NCBI Taxonomy" id="465817"/>
    <lineage>
        <taxon>Bacteria</taxon>
        <taxon>Pseudomonadati</taxon>
        <taxon>Pseudomonadota</taxon>
        <taxon>Gammaproteobacteria</taxon>
        <taxon>Enterobacterales</taxon>
        <taxon>Erwiniaceae</taxon>
        <taxon>Erwinia</taxon>
    </lineage>
</organism>
<evidence type="ECO:0000255" key="1">
    <source>
        <dbReference type="HAMAP-Rule" id="MF_00503"/>
    </source>
</evidence>
<evidence type="ECO:0000305" key="2"/>
<dbReference type="EMBL" id="CU468135">
    <property type="protein sequence ID" value="CAO97998.1"/>
    <property type="molecule type" value="Genomic_DNA"/>
</dbReference>
<dbReference type="RefSeq" id="WP_012442652.1">
    <property type="nucleotide sequence ID" value="NC_010694.1"/>
</dbReference>
<dbReference type="SMR" id="B2VCV8"/>
<dbReference type="STRING" id="465817.ETA_29520"/>
<dbReference type="KEGG" id="eta:ETA_29520"/>
<dbReference type="eggNOG" id="COG0359">
    <property type="taxonomic scope" value="Bacteria"/>
</dbReference>
<dbReference type="HOGENOM" id="CLU_078938_4_1_6"/>
<dbReference type="OrthoDB" id="9788336at2"/>
<dbReference type="Proteomes" id="UP000001726">
    <property type="component" value="Chromosome"/>
</dbReference>
<dbReference type="GO" id="GO:1990904">
    <property type="term" value="C:ribonucleoprotein complex"/>
    <property type="evidence" value="ECO:0007669"/>
    <property type="project" value="UniProtKB-KW"/>
</dbReference>
<dbReference type="GO" id="GO:0005840">
    <property type="term" value="C:ribosome"/>
    <property type="evidence" value="ECO:0007669"/>
    <property type="project" value="UniProtKB-KW"/>
</dbReference>
<dbReference type="GO" id="GO:0019843">
    <property type="term" value="F:rRNA binding"/>
    <property type="evidence" value="ECO:0007669"/>
    <property type="project" value="UniProtKB-UniRule"/>
</dbReference>
<dbReference type="GO" id="GO:0003735">
    <property type="term" value="F:structural constituent of ribosome"/>
    <property type="evidence" value="ECO:0007669"/>
    <property type="project" value="InterPro"/>
</dbReference>
<dbReference type="GO" id="GO:0006412">
    <property type="term" value="P:translation"/>
    <property type="evidence" value="ECO:0007669"/>
    <property type="project" value="UniProtKB-UniRule"/>
</dbReference>
<dbReference type="FunFam" id="3.10.430.100:FF:000001">
    <property type="entry name" value="50S ribosomal protein L9"/>
    <property type="match status" value="1"/>
</dbReference>
<dbReference type="FunFam" id="3.40.5.10:FF:000001">
    <property type="entry name" value="50S ribosomal protein L9"/>
    <property type="match status" value="1"/>
</dbReference>
<dbReference type="Gene3D" id="3.10.430.100">
    <property type="entry name" value="Ribosomal protein L9, C-terminal domain"/>
    <property type="match status" value="1"/>
</dbReference>
<dbReference type="Gene3D" id="3.40.5.10">
    <property type="entry name" value="Ribosomal protein L9, N-terminal domain"/>
    <property type="match status" value="1"/>
</dbReference>
<dbReference type="HAMAP" id="MF_00503">
    <property type="entry name" value="Ribosomal_bL9"/>
    <property type="match status" value="1"/>
</dbReference>
<dbReference type="InterPro" id="IPR000244">
    <property type="entry name" value="Ribosomal_bL9"/>
</dbReference>
<dbReference type="InterPro" id="IPR009027">
    <property type="entry name" value="Ribosomal_bL9/RNase_H1_N"/>
</dbReference>
<dbReference type="InterPro" id="IPR020594">
    <property type="entry name" value="Ribosomal_bL9_bac/chp"/>
</dbReference>
<dbReference type="InterPro" id="IPR020069">
    <property type="entry name" value="Ribosomal_bL9_C"/>
</dbReference>
<dbReference type="InterPro" id="IPR036791">
    <property type="entry name" value="Ribosomal_bL9_C_sf"/>
</dbReference>
<dbReference type="InterPro" id="IPR020070">
    <property type="entry name" value="Ribosomal_bL9_N"/>
</dbReference>
<dbReference type="InterPro" id="IPR036935">
    <property type="entry name" value="Ribosomal_bL9_N_sf"/>
</dbReference>
<dbReference type="NCBIfam" id="TIGR00158">
    <property type="entry name" value="L9"/>
    <property type="match status" value="1"/>
</dbReference>
<dbReference type="PANTHER" id="PTHR21368">
    <property type="entry name" value="50S RIBOSOMAL PROTEIN L9"/>
    <property type="match status" value="1"/>
</dbReference>
<dbReference type="Pfam" id="PF03948">
    <property type="entry name" value="Ribosomal_L9_C"/>
    <property type="match status" value="1"/>
</dbReference>
<dbReference type="Pfam" id="PF01281">
    <property type="entry name" value="Ribosomal_L9_N"/>
    <property type="match status" value="1"/>
</dbReference>
<dbReference type="SUPFAM" id="SSF55658">
    <property type="entry name" value="L9 N-domain-like"/>
    <property type="match status" value="1"/>
</dbReference>
<dbReference type="SUPFAM" id="SSF55653">
    <property type="entry name" value="Ribosomal protein L9 C-domain"/>
    <property type="match status" value="1"/>
</dbReference>
<dbReference type="PROSITE" id="PS00651">
    <property type="entry name" value="RIBOSOMAL_L9"/>
    <property type="match status" value="1"/>
</dbReference>
<proteinExistence type="inferred from homology"/>
<feature type="chain" id="PRO_1000126913" description="Large ribosomal subunit protein bL9">
    <location>
        <begin position="1"/>
        <end position="150"/>
    </location>
</feature>
<name>RL9_ERWT9</name>
<comment type="function">
    <text evidence="1">Binds to the 23S rRNA.</text>
</comment>
<comment type="similarity">
    <text evidence="1">Belongs to the bacterial ribosomal protein bL9 family.</text>
</comment>
<gene>
    <name evidence="1" type="primary">rplI</name>
    <name type="ordered locus">ETA_29520</name>
</gene>